<organism>
    <name type="scientific">Salmonella enteritidis PT4 (strain P125109)</name>
    <dbReference type="NCBI Taxonomy" id="550537"/>
    <lineage>
        <taxon>Bacteria</taxon>
        <taxon>Pseudomonadati</taxon>
        <taxon>Pseudomonadota</taxon>
        <taxon>Gammaproteobacteria</taxon>
        <taxon>Enterobacterales</taxon>
        <taxon>Enterobacteriaceae</taxon>
        <taxon>Salmonella</taxon>
    </lineage>
</organism>
<reference key="1">
    <citation type="journal article" date="2008" name="Genome Res.">
        <title>Comparative genome analysis of Salmonella enteritidis PT4 and Salmonella gallinarum 287/91 provides insights into evolutionary and host adaptation pathways.</title>
        <authorList>
            <person name="Thomson N.R."/>
            <person name="Clayton D.J."/>
            <person name="Windhorst D."/>
            <person name="Vernikos G."/>
            <person name="Davidson S."/>
            <person name="Churcher C."/>
            <person name="Quail M.A."/>
            <person name="Stevens M."/>
            <person name="Jones M.A."/>
            <person name="Watson M."/>
            <person name="Barron A."/>
            <person name="Layton A."/>
            <person name="Pickard D."/>
            <person name="Kingsley R.A."/>
            <person name="Bignell A."/>
            <person name="Clark L."/>
            <person name="Harris B."/>
            <person name="Ormond D."/>
            <person name="Abdellah Z."/>
            <person name="Brooks K."/>
            <person name="Cherevach I."/>
            <person name="Chillingworth T."/>
            <person name="Woodward J."/>
            <person name="Norberczak H."/>
            <person name="Lord A."/>
            <person name="Arrowsmith C."/>
            <person name="Jagels K."/>
            <person name="Moule S."/>
            <person name="Mungall K."/>
            <person name="Saunders M."/>
            <person name="Whitehead S."/>
            <person name="Chabalgoity J.A."/>
            <person name="Maskell D."/>
            <person name="Humphreys T."/>
            <person name="Roberts M."/>
            <person name="Barrow P.A."/>
            <person name="Dougan G."/>
            <person name="Parkhill J."/>
        </authorList>
    </citation>
    <scope>NUCLEOTIDE SEQUENCE [LARGE SCALE GENOMIC DNA]</scope>
    <source>
        <strain>P125109</strain>
    </source>
</reference>
<keyword id="KW-0050">Antiport</keyword>
<keyword id="KW-0997">Cell inner membrane</keyword>
<keyword id="KW-1003">Cell membrane</keyword>
<keyword id="KW-0472">Membrane</keyword>
<keyword id="KW-0812">Transmembrane</keyword>
<keyword id="KW-1133">Transmembrane helix</keyword>
<keyword id="KW-0813">Transport</keyword>
<protein>
    <recommendedName>
        <fullName evidence="1">Purine ribonucleoside efflux pump NepI</fullName>
    </recommendedName>
</protein>
<gene>
    <name evidence="1" type="primary">nepI</name>
    <name type="ordered locus">SEN3598</name>
</gene>
<name>NEPI_SALEP</name>
<sequence length="397" mass="41778">MNENIAEKFRADGVARPNWSAVFAVAFCVACLITVEFLPVSLLTPMAQDLGISEGIAGQSVTVTAFVAMFSSLFITQIIQATDRRYIVILFAVLLTASCLMVSFANSFTLLLLGRACLGLALGGFWAMSASLTMRLVPARTVPKALSVIFGAVSIALVIAAPLGSFLGGIIGWRNVFNAAAVMGVLCVIWVVKSLPSLPGEPSHQKQNMFSLLQRPGVMAGMIAIFMSFAGQFAFFTYIRPVYMNLAGFDVDGLTLVLLSFGIASFVGTSFSSYVLKRSVKLALAGAPLLLALSALTLIVWGSDKTVAAVIAIIWGLAFALVPVGWSTWITRSLADQAEKAGSIQVAVIQLANTCGAAVGGYALDNFGLLSPLALSGCLMLLTALVVAAKVRITPMS</sequence>
<proteinExistence type="inferred from homology"/>
<accession>B5QU11</accession>
<dbReference type="EMBL" id="AM933172">
    <property type="protein sequence ID" value="CAR35175.1"/>
    <property type="molecule type" value="Genomic_DNA"/>
</dbReference>
<dbReference type="RefSeq" id="WP_001004790.1">
    <property type="nucleotide sequence ID" value="NC_011294.1"/>
</dbReference>
<dbReference type="SMR" id="B5QU11"/>
<dbReference type="KEGG" id="set:SEN3598"/>
<dbReference type="HOGENOM" id="CLU_001265_61_1_6"/>
<dbReference type="Proteomes" id="UP000000613">
    <property type="component" value="Chromosome"/>
</dbReference>
<dbReference type="GO" id="GO:0005886">
    <property type="term" value="C:plasma membrane"/>
    <property type="evidence" value="ECO:0007669"/>
    <property type="project" value="UniProtKB-SubCell"/>
</dbReference>
<dbReference type="GO" id="GO:0015297">
    <property type="term" value="F:antiporter activity"/>
    <property type="evidence" value="ECO:0007669"/>
    <property type="project" value="UniProtKB-KW"/>
</dbReference>
<dbReference type="GO" id="GO:0015211">
    <property type="term" value="F:purine nucleoside transmembrane transporter activity"/>
    <property type="evidence" value="ECO:0007669"/>
    <property type="project" value="UniProtKB-UniRule"/>
</dbReference>
<dbReference type="CDD" id="cd17324">
    <property type="entry name" value="MFS_NepI_like"/>
    <property type="match status" value="1"/>
</dbReference>
<dbReference type="FunFam" id="1.20.1250.20:FF:000113">
    <property type="entry name" value="Purine ribonucleoside efflux pump NepI"/>
    <property type="match status" value="1"/>
</dbReference>
<dbReference type="Gene3D" id="1.20.1250.20">
    <property type="entry name" value="MFS general substrate transporter like domains"/>
    <property type="match status" value="1"/>
</dbReference>
<dbReference type="HAMAP" id="MF_01189">
    <property type="entry name" value="MFS_NepI"/>
    <property type="match status" value="1"/>
</dbReference>
<dbReference type="InterPro" id="IPR011701">
    <property type="entry name" value="MFS"/>
</dbReference>
<dbReference type="InterPro" id="IPR020846">
    <property type="entry name" value="MFS_dom"/>
</dbReference>
<dbReference type="InterPro" id="IPR050189">
    <property type="entry name" value="MFS_Efflux_Transporters"/>
</dbReference>
<dbReference type="InterPro" id="IPR023680">
    <property type="entry name" value="MFS_NepI"/>
</dbReference>
<dbReference type="InterPro" id="IPR036259">
    <property type="entry name" value="MFS_trans_sf"/>
</dbReference>
<dbReference type="NCBIfam" id="NF007578">
    <property type="entry name" value="PRK10213.1"/>
    <property type="match status" value="1"/>
</dbReference>
<dbReference type="PANTHER" id="PTHR43124">
    <property type="entry name" value="PURINE EFFLUX PUMP PBUE"/>
    <property type="match status" value="1"/>
</dbReference>
<dbReference type="PANTHER" id="PTHR43124:SF5">
    <property type="entry name" value="PURINE RIBONUCLEOSIDE EFFLUX PUMP NEPI"/>
    <property type="match status" value="1"/>
</dbReference>
<dbReference type="Pfam" id="PF07690">
    <property type="entry name" value="MFS_1"/>
    <property type="match status" value="1"/>
</dbReference>
<dbReference type="SUPFAM" id="SSF103473">
    <property type="entry name" value="MFS general substrate transporter"/>
    <property type="match status" value="1"/>
</dbReference>
<dbReference type="PROSITE" id="PS50850">
    <property type="entry name" value="MFS"/>
    <property type="match status" value="1"/>
</dbReference>
<comment type="function">
    <text evidence="1">Involved in the efflux of purine ribonucleosides, such as inosine and guanosine.</text>
</comment>
<comment type="catalytic activity">
    <reaction evidence="1">
        <text>inosine(in) + H(+)(out) = inosine(out) + H(+)(in)</text>
        <dbReference type="Rhea" id="RHEA:29211"/>
        <dbReference type="ChEBI" id="CHEBI:15378"/>
        <dbReference type="ChEBI" id="CHEBI:17596"/>
    </reaction>
    <physiologicalReaction direction="left-to-right" evidence="1">
        <dbReference type="Rhea" id="RHEA:29212"/>
    </physiologicalReaction>
</comment>
<comment type="catalytic activity">
    <reaction evidence="1">
        <text>guanosine(in) + H(+)(out) = guanosine(out) + H(+)(in)</text>
        <dbReference type="Rhea" id="RHEA:29583"/>
        <dbReference type="ChEBI" id="CHEBI:15378"/>
        <dbReference type="ChEBI" id="CHEBI:16750"/>
    </reaction>
    <physiologicalReaction direction="left-to-right" evidence="1">
        <dbReference type="Rhea" id="RHEA:29584"/>
    </physiologicalReaction>
</comment>
<comment type="subcellular location">
    <subcellularLocation>
        <location evidence="1">Cell inner membrane</location>
        <topology evidence="1">Multi-pass membrane protein</topology>
    </subcellularLocation>
</comment>
<comment type="similarity">
    <text evidence="1">Belongs to the major facilitator superfamily. DHA1 family. NepI (TC 2.A.1.2.26) subfamily.</text>
</comment>
<evidence type="ECO:0000255" key="1">
    <source>
        <dbReference type="HAMAP-Rule" id="MF_01189"/>
    </source>
</evidence>
<feature type="chain" id="PRO_1000138356" description="Purine ribonucleoside efflux pump NepI">
    <location>
        <begin position="1"/>
        <end position="397"/>
    </location>
</feature>
<feature type="topological domain" description="Cytoplasmic" evidence="1">
    <location>
        <begin position="1"/>
        <end position="21"/>
    </location>
</feature>
<feature type="transmembrane region" description="Helical" evidence="1">
    <location>
        <begin position="22"/>
        <end position="42"/>
    </location>
</feature>
<feature type="topological domain" description="Periplasmic" evidence="1">
    <location>
        <begin position="43"/>
        <end position="54"/>
    </location>
</feature>
<feature type="transmembrane region" description="Helical" evidence="1">
    <location>
        <begin position="55"/>
        <end position="75"/>
    </location>
</feature>
<feature type="topological domain" description="Cytoplasmic" evidence="1">
    <location>
        <begin position="76"/>
        <end position="85"/>
    </location>
</feature>
<feature type="transmembrane region" description="Helical" evidence="1">
    <location>
        <begin position="86"/>
        <end position="106"/>
    </location>
</feature>
<feature type="topological domain" description="Periplasmic" evidence="1">
    <location>
        <position position="107"/>
    </location>
</feature>
<feature type="transmembrane region" description="Helical" evidence="1">
    <location>
        <begin position="108"/>
        <end position="128"/>
    </location>
</feature>
<feature type="topological domain" description="Cytoplasmic" evidence="1">
    <location>
        <begin position="129"/>
        <end position="147"/>
    </location>
</feature>
<feature type="transmembrane region" description="Helical" evidence="1">
    <location>
        <begin position="148"/>
        <end position="168"/>
    </location>
</feature>
<feature type="topological domain" description="Periplasmic" evidence="1">
    <location>
        <begin position="169"/>
        <end position="175"/>
    </location>
</feature>
<feature type="transmembrane region" description="Helical" evidence="1">
    <location>
        <begin position="176"/>
        <end position="196"/>
    </location>
</feature>
<feature type="topological domain" description="Cytoplasmic" evidence="1">
    <location>
        <begin position="197"/>
        <end position="215"/>
    </location>
</feature>
<feature type="transmembrane region" description="Helical" evidence="1">
    <location>
        <begin position="216"/>
        <end position="236"/>
    </location>
</feature>
<feature type="topological domain" description="Periplasmic" evidence="1">
    <location>
        <begin position="237"/>
        <end position="255"/>
    </location>
</feature>
<feature type="transmembrane region" description="Helical" evidence="1">
    <location>
        <begin position="256"/>
        <end position="276"/>
    </location>
</feature>
<feature type="topological domain" description="Cytoplasmic" evidence="1">
    <location>
        <begin position="277"/>
        <end position="281"/>
    </location>
</feature>
<feature type="transmembrane region" description="Helical" evidence="1">
    <location>
        <begin position="282"/>
        <end position="302"/>
    </location>
</feature>
<feature type="topological domain" description="Periplasmic" evidence="1">
    <location>
        <begin position="303"/>
        <end position="305"/>
    </location>
</feature>
<feature type="transmembrane region" description="Helical" evidence="1">
    <location>
        <begin position="306"/>
        <end position="326"/>
    </location>
</feature>
<feature type="topological domain" description="Cytoplasmic" evidence="1">
    <location>
        <begin position="327"/>
        <end position="343"/>
    </location>
</feature>
<feature type="transmembrane region" description="Helical" evidence="1">
    <location>
        <begin position="344"/>
        <end position="364"/>
    </location>
</feature>
<feature type="topological domain" description="Periplasmic" evidence="1">
    <location>
        <begin position="365"/>
        <end position="366"/>
    </location>
</feature>
<feature type="transmembrane region" description="Helical" evidence="1">
    <location>
        <begin position="367"/>
        <end position="387"/>
    </location>
</feature>
<feature type="topological domain" description="Cytoplasmic" evidence="1">
    <location>
        <begin position="388"/>
        <end position="397"/>
    </location>
</feature>